<comment type="similarity">
    <text evidence="1">Belongs to the bacterial ribosomal protein bS16 family.</text>
</comment>
<dbReference type="EMBL" id="AM260479">
    <property type="protein sequence ID" value="CAJ92040.1"/>
    <property type="molecule type" value="Genomic_DNA"/>
</dbReference>
<dbReference type="RefSeq" id="WP_010812927.1">
    <property type="nucleotide sequence ID" value="NZ_CP039287.1"/>
</dbReference>
<dbReference type="SMR" id="Q0KD81"/>
<dbReference type="STRING" id="381666.H16_A0894"/>
<dbReference type="GeneID" id="34309759"/>
<dbReference type="KEGG" id="reh:H16_A0894"/>
<dbReference type="eggNOG" id="COG0228">
    <property type="taxonomic scope" value="Bacteria"/>
</dbReference>
<dbReference type="HOGENOM" id="CLU_100590_5_1_4"/>
<dbReference type="OrthoDB" id="9807878at2"/>
<dbReference type="Proteomes" id="UP000008210">
    <property type="component" value="Chromosome 1"/>
</dbReference>
<dbReference type="GO" id="GO:0005737">
    <property type="term" value="C:cytoplasm"/>
    <property type="evidence" value="ECO:0007669"/>
    <property type="project" value="UniProtKB-ARBA"/>
</dbReference>
<dbReference type="GO" id="GO:0015935">
    <property type="term" value="C:small ribosomal subunit"/>
    <property type="evidence" value="ECO:0007669"/>
    <property type="project" value="TreeGrafter"/>
</dbReference>
<dbReference type="GO" id="GO:0003735">
    <property type="term" value="F:structural constituent of ribosome"/>
    <property type="evidence" value="ECO:0007669"/>
    <property type="project" value="InterPro"/>
</dbReference>
<dbReference type="GO" id="GO:0006412">
    <property type="term" value="P:translation"/>
    <property type="evidence" value="ECO:0007669"/>
    <property type="project" value="UniProtKB-UniRule"/>
</dbReference>
<dbReference type="Gene3D" id="3.30.1320.10">
    <property type="match status" value="1"/>
</dbReference>
<dbReference type="HAMAP" id="MF_00385">
    <property type="entry name" value="Ribosomal_bS16"/>
    <property type="match status" value="1"/>
</dbReference>
<dbReference type="InterPro" id="IPR000307">
    <property type="entry name" value="Ribosomal_bS16"/>
</dbReference>
<dbReference type="InterPro" id="IPR023803">
    <property type="entry name" value="Ribosomal_bS16_dom_sf"/>
</dbReference>
<dbReference type="NCBIfam" id="TIGR00002">
    <property type="entry name" value="S16"/>
    <property type="match status" value="1"/>
</dbReference>
<dbReference type="PANTHER" id="PTHR12919">
    <property type="entry name" value="30S RIBOSOMAL PROTEIN S16"/>
    <property type="match status" value="1"/>
</dbReference>
<dbReference type="PANTHER" id="PTHR12919:SF20">
    <property type="entry name" value="SMALL RIBOSOMAL SUBUNIT PROTEIN BS16M"/>
    <property type="match status" value="1"/>
</dbReference>
<dbReference type="Pfam" id="PF00886">
    <property type="entry name" value="Ribosomal_S16"/>
    <property type="match status" value="1"/>
</dbReference>
<dbReference type="SUPFAM" id="SSF54565">
    <property type="entry name" value="Ribosomal protein S16"/>
    <property type="match status" value="1"/>
</dbReference>
<evidence type="ECO:0000255" key="1">
    <source>
        <dbReference type="HAMAP-Rule" id="MF_00385"/>
    </source>
</evidence>
<evidence type="ECO:0000305" key="2"/>
<keyword id="KW-1185">Reference proteome</keyword>
<keyword id="KW-0687">Ribonucleoprotein</keyword>
<keyword id="KW-0689">Ribosomal protein</keyword>
<accession>Q0KD81</accession>
<protein>
    <recommendedName>
        <fullName evidence="1">Small ribosomal subunit protein bS16</fullName>
    </recommendedName>
    <alternativeName>
        <fullName evidence="2">30S ribosomal protein S16</fullName>
    </alternativeName>
</protein>
<feature type="chain" id="PRO_1000049326" description="Small ribosomal subunit protein bS16">
    <location>
        <begin position="1"/>
        <end position="84"/>
    </location>
</feature>
<sequence length="84" mass="9246">MVVIRLARGGSKKRPFFNIVATDSRNRRDGRFIERVGFYNPLATEGEEGLRLAQDRLAYWQGVGAQLSPTVARLVKQGAAKAAA</sequence>
<proteinExistence type="inferred from homology"/>
<name>RS16_CUPNH</name>
<reference key="1">
    <citation type="journal article" date="2006" name="Nat. Biotechnol.">
        <title>Genome sequence of the bioplastic-producing 'Knallgas' bacterium Ralstonia eutropha H16.</title>
        <authorList>
            <person name="Pohlmann A."/>
            <person name="Fricke W.F."/>
            <person name="Reinecke F."/>
            <person name="Kusian B."/>
            <person name="Liesegang H."/>
            <person name="Cramm R."/>
            <person name="Eitinger T."/>
            <person name="Ewering C."/>
            <person name="Poetter M."/>
            <person name="Schwartz E."/>
            <person name="Strittmatter A."/>
            <person name="Voss I."/>
            <person name="Gottschalk G."/>
            <person name="Steinbuechel A."/>
            <person name="Friedrich B."/>
            <person name="Bowien B."/>
        </authorList>
    </citation>
    <scope>NUCLEOTIDE SEQUENCE [LARGE SCALE GENOMIC DNA]</scope>
    <source>
        <strain>ATCC 17699 / DSM 428 / KCTC 22496 / NCIMB 10442 / H16 / Stanier 337</strain>
    </source>
</reference>
<organism>
    <name type="scientific">Cupriavidus necator (strain ATCC 17699 / DSM 428 / KCTC 22496 / NCIMB 10442 / H16 / Stanier 337)</name>
    <name type="common">Ralstonia eutropha</name>
    <dbReference type="NCBI Taxonomy" id="381666"/>
    <lineage>
        <taxon>Bacteria</taxon>
        <taxon>Pseudomonadati</taxon>
        <taxon>Pseudomonadota</taxon>
        <taxon>Betaproteobacteria</taxon>
        <taxon>Burkholderiales</taxon>
        <taxon>Burkholderiaceae</taxon>
        <taxon>Cupriavidus</taxon>
    </lineage>
</organism>
<gene>
    <name evidence="1" type="primary">rpsP</name>
    <name type="ordered locus">H16_A0894</name>
</gene>